<keyword id="KW-0067">ATP-binding</keyword>
<keyword id="KW-0460">Magnesium</keyword>
<keyword id="KW-0547">Nucleotide-binding</keyword>
<keyword id="KW-0808">Transferase</keyword>
<keyword id="KW-0819">tRNA processing</keyword>
<name>MIAA_MYCSK</name>
<feature type="chain" id="PRO_0000377230" description="tRNA dimethylallyltransferase">
    <location>
        <begin position="1"/>
        <end position="305"/>
    </location>
</feature>
<feature type="binding site" evidence="1">
    <location>
        <begin position="8"/>
        <end position="15"/>
    </location>
    <ligand>
        <name>ATP</name>
        <dbReference type="ChEBI" id="CHEBI:30616"/>
    </ligand>
</feature>
<feature type="binding site" evidence="1">
    <location>
        <begin position="10"/>
        <end position="15"/>
    </location>
    <ligand>
        <name>substrate</name>
    </ligand>
</feature>
<feature type="site" description="Interaction with substrate tRNA" evidence="1">
    <location>
        <position position="103"/>
    </location>
</feature>
<feature type="site" description="Interaction with substrate tRNA" evidence="1">
    <location>
        <position position="124"/>
    </location>
</feature>
<protein>
    <recommendedName>
        <fullName evidence="1">tRNA dimethylallyltransferase</fullName>
        <ecNumber evidence="1">2.5.1.75</ecNumber>
    </recommendedName>
    <alternativeName>
        <fullName evidence="1">Dimethylallyl diphosphate:tRNA dimethylallyltransferase</fullName>
        <shortName evidence="1">DMAPP:tRNA dimethylallyltransferase</shortName>
        <shortName evidence="1">DMATase</shortName>
    </alternativeName>
    <alternativeName>
        <fullName evidence="1">Isopentenyl-diphosphate:tRNA isopentenyltransferase</fullName>
        <shortName evidence="1">IPP transferase</shortName>
        <shortName evidence="1">IPPT</shortName>
        <shortName evidence="1">IPTase</shortName>
    </alternativeName>
</protein>
<dbReference type="EC" id="2.5.1.75" evidence="1"/>
<dbReference type="EMBL" id="CP000518">
    <property type="protein sequence ID" value="ABL91406.1"/>
    <property type="molecule type" value="Genomic_DNA"/>
</dbReference>
<dbReference type="SMR" id="A1UEZ8"/>
<dbReference type="STRING" id="189918.Mkms_2208"/>
<dbReference type="KEGG" id="mkm:Mkms_2208"/>
<dbReference type="HOGENOM" id="CLU_032616_0_1_11"/>
<dbReference type="OrthoDB" id="9776390at2"/>
<dbReference type="GO" id="GO:0005524">
    <property type="term" value="F:ATP binding"/>
    <property type="evidence" value="ECO:0007669"/>
    <property type="project" value="UniProtKB-UniRule"/>
</dbReference>
<dbReference type="GO" id="GO:0052381">
    <property type="term" value="F:tRNA dimethylallyltransferase activity"/>
    <property type="evidence" value="ECO:0007669"/>
    <property type="project" value="UniProtKB-UniRule"/>
</dbReference>
<dbReference type="GO" id="GO:0006400">
    <property type="term" value="P:tRNA modification"/>
    <property type="evidence" value="ECO:0007669"/>
    <property type="project" value="TreeGrafter"/>
</dbReference>
<dbReference type="FunFam" id="1.10.20.140:FF:000001">
    <property type="entry name" value="tRNA dimethylallyltransferase"/>
    <property type="match status" value="1"/>
</dbReference>
<dbReference type="Gene3D" id="1.10.20.140">
    <property type="match status" value="1"/>
</dbReference>
<dbReference type="Gene3D" id="3.40.50.300">
    <property type="entry name" value="P-loop containing nucleotide triphosphate hydrolases"/>
    <property type="match status" value="1"/>
</dbReference>
<dbReference type="HAMAP" id="MF_00185">
    <property type="entry name" value="IPP_trans"/>
    <property type="match status" value="1"/>
</dbReference>
<dbReference type="InterPro" id="IPR039657">
    <property type="entry name" value="Dimethylallyltransferase"/>
</dbReference>
<dbReference type="InterPro" id="IPR018022">
    <property type="entry name" value="IPT"/>
</dbReference>
<dbReference type="InterPro" id="IPR027417">
    <property type="entry name" value="P-loop_NTPase"/>
</dbReference>
<dbReference type="NCBIfam" id="TIGR00174">
    <property type="entry name" value="miaA"/>
    <property type="match status" value="1"/>
</dbReference>
<dbReference type="PANTHER" id="PTHR11088">
    <property type="entry name" value="TRNA DIMETHYLALLYLTRANSFERASE"/>
    <property type="match status" value="1"/>
</dbReference>
<dbReference type="PANTHER" id="PTHR11088:SF60">
    <property type="entry name" value="TRNA DIMETHYLALLYLTRANSFERASE"/>
    <property type="match status" value="1"/>
</dbReference>
<dbReference type="Pfam" id="PF01715">
    <property type="entry name" value="IPPT"/>
    <property type="match status" value="1"/>
</dbReference>
<dbReference type="SUPFAM" id="SSF52540">
    <property type="entry name" value="P-loop containing nucleoside triphosphate hydrolases"/>
    <property type="match status" value="1"/>
</dbReference>
<reference key="1">
    <citation type="submission" date="2006-12" db="EMBL/GenBank/DDBJ databases">
        <title>Complete sequence of chromosome of Mycobacterium sp. KMS.</title>
        <authorList>
            <consortium name="US DOE Joint Genome Institute"/>
            <person name="Copeland A."/>
            <person name="Lucas S."/>
            <person name="Lapidus A."/>
            <person name="Barry K."/>
            <person name="Detter J.C."/>
            <person name="Glavina del Rio T."/>
            <person name="Hammon N."/>
            <person name="Israni S."/>
            <person name="Dalin E."/>
            <person name="Tice H."/>
            <person name="Pitluck S."/>
            <person name="Kiss H."/>
            <person name="Brettin T."/>
            <person name="Bruce D."/>
            <person name="Han C."/>
            <person name="Tapia R."/>
            <person name="Gilna P."/>
            <person name="Schmutz J."/>
            <person name="Larimer F."/>
            <person name="Land M."/>
            <person name="Hauser L."/>
            <person name="Kyrpides N."/>
            <person name="Mikhailova N."/>
            <person name="Miller C.D."/>
            <person name="Richardson P."/>
        </authorList>
    </citation>
    <scope>NUCLEOTIDE SEQUENCE [LARGE SCALE GENOMIC DNA]</scope>
    <source>
        <strain>KMS</strain>
    </source>
</reference>
<comment type="function">
    <text evidence="1">Catalyzes the transfer of a dimethylallyl group onto the adenine at position 37 in tRNAs that read codons beginning with uridine, leading to the formation of N6-(dimethylallyl)adenosine (i(6)A).</text>
</comment>
<comment type="catalytic activity">
    <reaction evidence="1">
        <text>adenosine(37) in tRNA + dimethylallyl diphosphate = N(6)-dimethylallyladenosine(37) in tRNA + diphosphate</text>
        <dbReference type="Rhea" id="RHEA:26482"/>
        <dbReference type="Rhea" id="RHEA-COMP:10162"/>
        <dbReference type="Rhea" id="RHEA-COMP:10375"/>
        <dbReference type="ChEBI" id="CHEBI:33019"/>
        <dbReference type="ChEBI" id="CHEBI:57623"/>
        <dbReference type="ChEBI" id="CHEBI:74411"/>
        <dbReference type="ChEBI" id="CHEBI:74415"/>
        <dbReference type="EC" id="2.5.1.75"/>
    </reaction>
</comment>
<comment type="cofactor">
    <cofactor evidence="1">
        <name>Mg(2+)</name>
        <dbReference type="ChEBI" id="CHEBI:18420"/>
    </cofactor>
</comment>
<comment type="subunit">
    <text evidence="1">Monomer.</text>
</comment>
<comment type="similarity">
    <text evidence="1">Belongs to the IPP transferase family.</text>
</comment>
<evidence type="ECO:0000255" key="1">
    <source>
        <dbReference type="HAMAP-Rule" id="MF_00185"/>
    </source>
</evidence>
<sequence>MRPLAIIGPTGTGKSALALDVAERLGGEIGVEIVNADAMQLYRGMDIGTAKLPAAQRRGVPHHQLDVLDVTETASVARYQSEAARDIEAIAARGAVPIIVGGSMMYVQALLDDWAFPATDPAVRARWEQRLAEVGVAALHGELGKVDPDAAASILPTDGRRIVRALEVVELTGQPFAASAPTIGAPRWDTAIIGLDWETTVLDERLAARTDSMFAEGLVAEVAGLLRHGLREGVTASRALGYAQVLADLDAGGDGSAAREPTFVGTRRYVRRQRSWFRRDHRVCWLDGGSPDNVDRTLRAWRAVS</sequence>
<gene>
    <name evidence="1" type="primary">miaA</name>
    <name type="ordered locus">Mkms_2208</name>
</gene>
<accession>A1UEZ8</accession>
<organism>
    <name type="scientific">Mycobacterium sp. (strain KMS)</name>
    <dbReference type="NCBI Taxonomy" id="189918"/>
    <lineage>
        <taxon>Bacteria</taxon>
        <taxon>Bacillati</taxon>
        <taxon>Actinomycetota</taxon>
        <taxon>Actinomycetes</taxon>
        <taxon>Mycobacteriales</taxon>
        <taxon>Mycobacteriaceae</taxon>
        <taxon>Mycobacterium</taxon>
    </lineage>
</organism>
<proteinExistence type="inferred from homology"/>